<feature type="chain" id="PRO_0000448409" description="Protein FPV127">
    <location>
        <begin position="1"/>
        <end position="336"/>
    </location>
</feature>
<feature type="region of interest" description="Disordered" evidence="1">
    <location>
        <begin position="1"/>
        <end position="22"/>
    </location>
</feature>
<accession>P0DTB2</accession>
<accession>P15909</accession>
<accession>Q70H31</accession>
<accession>Q9J596</accession>
<sequence>MGGGLVLPTRDPPKEQDTSETATNIPKLLKSIPGVKLGQQIRIGYKPGPETAKAFPEFDIKEVSNGLYELSRKSYLGDTKTCCINPSLSYYWEDSKNKIFDEYATGRSLKTCDPLTKTISGSTLCDNILTSLCLDEKSGVDRTMCNEWMGYALNRPDLSIPKSINDRYTKLCSKGANNIVCEDWLHHLRIIGGKENDEVIDNVLMQQTPEFKEKYMKCSFPSHNTVFLAYRVIEPRECWDQECITSNVHFLLSKNYHNLTLCHIYRCNISINNLLIDGKSSVKISCHDENISNKDKPKARNKAKFIDDILGSSFNINFGFFFVIFIMIALILIVLL</sequence>
<evidence type="ECO:0000256" key="1">
    <source>
        <dbReference type="SAM" id="MobiDB-lite"/>
    </source>
</evidence>
<evidence type="ECO:0000305" key="2"/>
<proteinExistence type="inferred from homology"/>
<name>V127_FOWPV</name>
<gene>
    <name type="ordered locus">FPV127</name>
    <name type="ordered locus">fp9.127</name>
    <name type="ORF">FP1</name>
</gene>
<organismHost>
    <name type="scientific">Vertebrata</name>
    <dbReference type="NCBI Taxonomy" id="7742"/>
</organismHost>
<organism>
    <name type="scientific">Fowlpox virus</name>
    <name type="common">FPV</name>
    <dbReference type="NCBI Taxonomy" id="10261"/>
    <lineage>
        <taxon>Viruses</taxon>
        <taxon>Varidnaviria</taxon>
        <taxon>Bamfordvirae</taxon>
        <taxon>Nucleocytoviricota</taxon>
        <taxon>Pokkesviricetes</taxon>
        <taxon>Chitovirales</taxon>
        <taxon>Poxviridae</taxon>
        <taxon>Chordopoxvirinae</taxon>
        <taxon>Avipoxvirus</taxon>
    </lineage>
</organism>
<protein>
    <recommendedName>
        <fullName>Protein FPV127</fullName>
    </recommendedName>
</protein>
<dbReference type="EMBL" id="D00320">
    <property type="protein sequence ID" value="BAA00224.1"/>
    <property type="molecule type" value="Genomic_DNA"/>
</dbReference>
<dbReference type="EMBL" id="AJ581527">
    <property type="protein sequence ID" value="CAE52666.1"/>
    <property type="molecule type" value="Genomic_DNA"/>
</dbReference>
<dbReference type="PIR" id="JS0221">
    <property type="entry name" value="WMVZP1"/>
</dbReference>
<dbReference type="SMR" id="P0DTB2"/>
<dbReference type="Proteomes" id="UP000150838">
    <property type="component" value="Segment"/>
</dbReference>
<dbReference type="InterPro" id="IPR004251">
    <property type="entry name" value="Pox_virus_G9/A16"/>
</dbReference>
<dbReference type="Pfam" id="PF03003">
    <property type="entry name" value="Pox_G9-A16"/>
    <property type="match status" value="1"/>
</dbReference>
<reference key="1">
    <citation type="journal article" date="1988" name="J. Gen. Virol.">
        <title>Comparison of a conserved region in fowlpox virus and vaccinia virus genomes and the translocation of the fowlpox virus thymidine kinase gene.</title>
        <authorList>
            <person name="Binns M.M."/>
            <person name="Tomley F.M."/>
            <person name="Campbell J."/>
            <person name="Boursnell M.E.G."/>
        </authorList>
    </citation>
    <scope>NUCLEOTIDE SEQUENCE [GENOMIC DNA]</scope>
    <source>
        <strain>FP-9 / Isolate HP-444</strain>
    </source>
</reference>
<reference key="2">
    <citation type="journal article" date="2004" name="J. Gen. Virol.">
        <title>Comparison of the genome sequence of FP9, an attenuated, tissue culture-adapted European fowlpox virus, with those of virulent American and European viruses.</title>
        <authorList>
            <person name="Skinner M.A."/>
            <person name="Laidlaw S.M."/>
        </authorList>
    </citation>
    <scope>NUCLEOTIDE SEQUENCE [GENOMIC DNA]</scope>
    <source>
        <strain>FP-9 / Isolate HP1-438 Munich</strain>
    </source>
</reference>
<comment type="similarity">
    <text evidence="2">Belongs to the poxviruses A16/G9/J5 family.</text>
</comment>